<evidence type="ECO:0000250" key="1">
    <source>
        <dbReference type="UniProtKB" id="P43251"/>
    </source>
</evidence>
<evidence type="ECO:0000255" key="2"/>
<evidence type="ECO:0000255" key="3">
    <source>
        <dbReference type="PROSITE-ProRule" id="PRU00054"/>
    </source>
</evidence>
<evidence type="ECO:0000305" key="4"/>
<keyword id="KW-0325">Glycoprotein</keyword>
<keyword id="KW-0378">Hydrolase</keyword>
<keyword id="KW-1185">Reference proteome</keyword>
<keyword id="KW-0964">Secreted</keyword>
<keyword id="KW-0732">Signal</keyword>
<feature type="signal peptide" evidence="2">
    <location>
        <begin position="1"/>
        <end position="26"/>
    </location>
</feature>
<feature type="chain" id="PRO_0000368204" description="Biotinidase">
    <location>
        <begin position="27"/>
        <end position="525"/>
    </location>
</feature>
<feature type="domain" description="CN hydrolase" evidence="3">
    <location>
        <begin position="54"/>
        <end position="333"/>
    </location>
</feature>
<feature type="active site" description="Proton acceptor" evidence="3">
    <location>
        <position position="94"/>
    </location>
</feature>
<feature type="active site" description="Proton donor" evidence="3">
    <location>
        <position position="194"/>
    </location>
</feature>
<feature type="active site" description="Nucleophile" evidence="3">
    <location>
        <position position="227"/>
    </location>
</feature>
<feature type="glycosylation site" description="N-linked (GlcNAc...) asparagine" evidence="2">
    <location>
        <position position="132"/>
    </location>
</feature>
<feature type="glycosylation site" description="N-linked (GlcNAc...) asparagine" evidence="2">
    <location>
        <position position="185"/>
    </location>
</feature>
<feature type="glycosylation site" description="N-linked (GlcNAc...) asparagine" evidence="2">
    <location>
        <position position="384"/>
    </location>
</feature>
<proteinExistence type="evidence at transcript level"/>
<accession>A6QQ07</accession>
<protein>
    <recommendedName>
        <fullName>Biotinidase</fullName>
        <shortName>Biotinase</shortName>
        <ecNumber evidence="1">3.5.1.12</ecNumber>
    </recommendedName>
</protein>
<comment type="function">
    <text evidence="1">Catalytic release of biotin from biocytin, the product of biotin-dependent carboxylases degradation.</text>
</comment>
<comment type="catalytic activity">
    <reaction evidence="1">
        <text>biocytin + H2O = biotin + L-lysine</text>
        <dbReference type="Rhea" id="RHEA:77171"/>
        <dbReference type="ChEBI" id="CHEBI:15377"/>
        <dbReference type="ChEBI" id="CHEBI:32551"/>
        <dbReference type="ChEBI" id="CHEBI:57586"/>
        <dbReference type="ChEBI" id="CHEBI:195545"/>
        <dbReference type="EC" id="3.5.1.12"/>
    </reaction>
</comment>
<comment type="catalytic activity">
    <reaction evidence="1">
        <text>biotin amide + H2O = biotin + NH4(+)</text>
        <dbReference type="Rhea" id="RHEA:13081"/>
        <dbReference type="ChEBI" id="CHEBI:15377"/>
        <dbReference type="ChEBI" id="CHEBI:16615"/>
        <dbReference type="ChEBI" id="CHEBI:28938"/>
        <dbReference type="ChEBI" id="CHEBI:57586"/>
    </reaction>
    <physiologicalReaction direction="left-to-right" evidence="1">
        <dbReference type="Rhea" id="RHEA:13082"/>
    </physiologicalReaction>
</comment>
<comment type="subcellular location">
    <subcellularLocation>
        <location evidence="1">Secreted</location>
        <location evidence="1">Extracellular space</location>
    </subcellularLocation>
</comment>
<comment type="similarity">
    <text evidence="4">Belongs to the carbon-nitrogen hydrolase superfamily. BTD/VNN family.</text>
</comment>
<dbReference type="EC" id="3.5.1.12" evidence="1"/>
<dbReference type="EMBL" id="BC149584">
    <property type="protein sequence ID" value="AAI49585.1"/>
    <property type="molecule type" value="mRNA"/>
</dbReference>
<dbReference type="RefSeq" id="NP_001095676.1">
    <property type="nucleotide sequence ID" value="NM_001102206.1"/>
</dbReference>
<dbReference type="SMR" id="A6QQ07"/>
<dbReference type="FunCoup" id="A6QQ07">
    <property type="interactions" value="86"/>
</dbReference>
<dbReference type="STRING" id="9913.ENSBTAP00000058687"/>
<dbReference type="GlyCosmos" id="A6QQ07">
    <property type="glycosylation" value="3 sites, No reported glycans"/>
</dbReference>
<dbReference type="GlyGen" id="A6QQ07">
    <property type="glycosylation" value="3 sites"/>
</dbReference>
<dbReference type="PaxDb" id="9913-ENSBTAP00000025464"/>
<dbReference type="GeneID" id="537669"/>
<dbReference type="KEGG" id="bta:537669"/>
<dbReference type="CTD" id="686"/>
<dbReference type="eggNOG" id="KOG0806">
    <property type="taxonomic scope" value="Eukaryota"/>
</dbReference>
<dbReference type="InParanoid" id="A6QQ07"/>
<dbReference type="OrthoDB" id="10250282at2759"/>
<dbReference type="Proteomes" id="UP000009136">
    <property type="component" value="Unplaced"/>
</dbReference>
<dbReference type="GO" id="GO:0005576">
    <property type="term" value="C:extracellular region"/>
    <property type="evidence" value="ECO:0007669"/>
    <property type="project" value="UniProtKB-SubCell"/>
</dbReference>
<dbReference type="GO" id="GO:0047708">
    <property type="term" value="F:biotinidase activity"/>
    <property type="evidence" value="ECO:0007669"/>
    <property type="project" value="UniProtKB-EC"/>
</dbReference>
<dbReference type="GO" id="GO:0006768">
    <property type="term" value="P:biotin metabolic process"/>
    <property type="evidence" value="ECO:0000318"/>
    <property type="project" value="GO_Central"/>
</dbReference>
<dbReference type="CDD" id="cd07567">
    <property type="entry name" value="biotinidase_like"/>
    <property type="match status" value="1"/>
</dbReference>
<dbReference type="FunFam" id="3.60.110.10:FF:000001">
    <property type="entry name" value="biotinidase isoform X1"/>
    <property type="match status" value="1"/>
</dbReference>
<dbReference type="Gene3D" id="3.60.110.10">
    <property type="entry name" value="Carbon-nitrogen hydrolase"/>
    <property type="match status" value="1"/>
</dbReference>
<dbReference type="InterPro" id="IPR012101">
    <property type="entry name" value="Biotinidase-like_euk"/>
</dbReference>
<dbReference type="InterPro" id="IPR040154">
    <property type="entry name" value="Biotinidase/VNN"/>
</dbReference>
<dbReference type="InterPro" id="IPR003010">
    <property type="entry name" value="C-N_Hydrolase"/>
</dbReference>
<dbReference type="InterPro" id="IPR036526">
    <property type="entry name" value="C-N_Hydrolase_sf"/>
</dbReference>
<dbReference type="InterPro" id="IPR043957">
    <property type="entry name" value="Vanin_C"/>
</dbReference>
<dbReference type="PANTHER" id="PTHR10609:SF14">
    <property type="entry name" value="BIOTINIDASE"/>
    <property type="match status" value="1"/>
</dbReference>
<dbReference type="PANTHER" id="PTHR10609">
    <property type="entry name" value="BIOTINIDASE-RELATED"/>
    <property type="match status" value="1"/>
</dbReference>
<dbReference type="Pfam" id="PF00795">
    <property type="entry name" value="CN_hydrolase"/>
    <property type="match status" value="1"/>
</dbReference>
<dbReference type="Pfam" id="PF19018">
    <property type="entry name" value="Vanin_C"/>
    <property type="match status" value="1"/>
</dbReference>
<dbReference type="PIRSF" id="PIRSF011861">
    <property type="entry name" value="Biotinidase"/>
    <property type="match status" value="1"/>
</dbReference>
<dbReference type="SUPFAM" id="SSF56317">
    <property type="entry name" value="Carbon-nitrogen hydrolase"/>
    <property type="match status" value="1"/>
</dbReference>
<dbReference type="PROSITE" id="PS50263">
    <property type="entry name" value="CN_HYDROLASE"/>
    <property type="match status" value="1"/>
</dbReference>
<organism>
    <name type="scientific">Bos taurus</name>
    <name type="common">Bovine</name>
    <dbReference type="NCBI Taxonomy" id="9913"/>
    <lineage>
        <taxon>Eukaryota</taxon>
        <taxon>Metazoa</taxon>
        <taxon>Chordata</taxon>
        <taxon>Craniata</taxon>
        <taxon>Vertebrata</taxon>
        <taxon>Euteleostomi</taxon>
        <taxon>Mammalia</taxon>
        <taxon>Eutheria</taxon>
        <taxon>Laurasiatheria</taxon>
        <taxon>Artiodactyla</taxon>
        <taxon>Ruminantia</taxon>
        <taxon>Pecora</taxon>
        <taxon>Bovidae</taxon>
        <taxon>Bovinae</taxon>
        <taxon>Bos</taxon>
    </lineage>
</organism>
<reference key="1">
    <citation type="submission" date="2007-07" db="EMBL/GenBank/DDBJ databases">
        <authorList>
            <consortium name="NIH - Mammalian Gene Collection (MGC) project"/>
        </authorList>
    </citation>
    <scope>NUCLEOTIDE SEQUENCE [LARGE SCALE MRNA]</scope>
    <source>
        <strain>Hereford</strain>
        <tissue>Fetal spinal cord</tissue>
    </source>
</reference>
<name>BTD_BOVIN</name>
<sequence>MSRAGRQLALLLCSCCVAVAIPGGLAEEGCPAEPHQASRYVAAVYEHQSFLSPDPLALTSREQALELMHRNLDVYEQQVTTAARKGAQIIVFPEDGIHGFNFTRTSIYPFLDFMPSPRSVRWNPCLEPHRFNDTEVLQRLSCMAMKGEMFLVANLGTKQPCHSSDPGCPSDGRYQFNTNVVFSSNGTLVDRYRKHNLYFEAAFDTPLEVDHTVFDTPFAGKFGVFTCFDILFFDPAVRLLQDSEVKHVVYPTAWMNQLPLLAAIQIQRGFAIAFVINLLAANIHHPSLGMTGSGIHTPLKSFWHHSMDSPEGHLIIAEVARNPPGLISAGNATGKTDPFHRKFLQLLAGDPYSEKDAQDVHCDAAPKSTTNASPTFNSEMMYDNFTLVPVWGRDGHVHVCAHGLCCHLLYQRPTVSQELYALGVFDGLHTVHGTYYVQVCALVKCGGLGFDTCGQEITEAMGMFEFHLWGNFSTSYIFPMLLTSGMMLETPDQLGWESDQYFLKKRGLSSGLVTAALYGRLYERD</sequence>
<gene>
    <name type="primary">BTD</name>
</gene>